<gene>
    <name evidence="1" type="primary">moaA</name>
    <name type="ordered locus">PputGB1_4127</name>
</gene>
<proteinExistence type="inferred from homology"/>
<feature type="chain" id="PRO_1000085705" description="GTP 3',8-cyclase">
    <location>
        <begin position="1"/>
        <end position="334"/>
    </location>
</feature>
<feature type="domain" description="Radical SAM core" evidence="2">
    <location>
        <begin position="11"/>
        <end position="236"/>
    </location>
</feature>
<feature type="binding site" evidence="1">
    <location>
        <position position="20"/>
    </location>
    <ligand>
        <name>GTP</name>
        <dbReference type="ChEBI" id="CHEBI:37565"/>
    </ligand>
</feature>
<feature type="binding site" evidence="1">
    <location>
        <position position="27"/>
    </location>
    <ligand>
        <name>[4Fe-4S] cluster</name>
        <dbReference type="ChEBI" id="CHEBI:49883"/>
        <label>1</label>
        <note>4Fe-4S-S-AdoMet</note>
    </ligand>
</feature>
<feature type="binding site" evidence="1">
    <location>
        <position position="31"/>
    </location>
    <ligand>
        <name>[4Fe-4S] cluster</name>
        <dbReference type="ChEBI" id="CHEBI:49883"/>
        <label>1</label>
        <note>4Fe-4S-S-AdoMet</note>
    </ligand>
</feature>
<feature type="binding site" evidence="1">
    <location>
        <position position="33"/>
    </location>
    <ligand>
        <name>S-adenosyl-L-methionine</name>
        <dbReference type="ChEBI" id="CHEBI:59789"/>
    </ligand>
</feature>
<feature type="binding site" evidence="1">
    <location>
        <position position="34"/>
    </location>
    <ligand>
        <name>[4Fe-4S] cluster</name>
        <dbReference type="ChEBI" id="CHEBI:49883"/>
        <label>1</label>
        <note>4Fe-4S-S-AdoMet</note>
    </ligand>
</feature>
<feature type="binding site" evidence="1">
    <location>
        <position position="69"/>
    </location>
    <ligand>
        <name>GTP</name>
        <dbReference type="ChEBI" id="CHEBI:37565"/>
    </ligand>
</feature>
<feature type="binding site" evidence="1">
    <location>
        <position position="73"/>
    </location>
    <ligand>
        <name>S-adenosyl-L-methionine</name>
        <dbReference type="ChEBI" id="CHEBI:59789"/>
    </ligand>
</feature>
<feature type="binding site" evidence="1">
    <location>
        <position position="100"/>
    </location>
    <ligand>
        <name>GTP</name>
        <dbReference type="ChEBI" id="CHEBI:37565"/>
    </ligand>
</feature>
<feature type="binding site" evidence="1">
    <location>
        <position position="124"/>
    </location>
    <ligand>
        <name>S-adenosyl-L-methionine</name>
        <dbReference type="ChEBI" id="CHEBI:59789"/>
    </ligand>
</feature>
<feature type="binding site" evidence="1">
    <location>
        <position position="161"/>
    </location>
    <ligand>
        <name>GTP</name>
        <dbReference type="ChEBI" id="CHEBI:37565"/>
    </ligand>
</feature>
<feature type="binding site" evidence="1">
    <location>
        <position position="195"/>
    </location>
    <ligand>
        <name>S-adenosyl-L-methionine</name>
        <dbReference type="ChEBI" id="CHEBI:59789"/>
    </ligand>
</feature>
<feature type="binding site" evidence="1">
    <location>
        <position position="260"/>
    </location>
    <ligand>
        <name>[4Fe-4S] cluster</name>
        <dbReference type="ChEBI" id="CHEBI:49883"/>
        <label>2</label>
        <note>4Fe-4S-substrate</note>
    </ligand>
</feature>
<feature type="binding site" evidence="1">
    <location>
        <position position="263"/>
    </location>
    <ligand>
        <name>[4Fe-4S] cluster</name>
        <dbReference type="ChEBI" id="CHEBI:49883"/>
        <label>2</label>
        <note>4Fe-4S-substrate</note>
    </ligand>
</feature>
<feature type="binding site" evidence="1">
    <location>
        <begin position="265"/>
        <end position="267"/>
    </location>
    <ligand>
        <name>GTP</name>
        <dbReference type="ChEBI" id="CHEBI:37565"/>
    </ligand>
</feature>
<feature type="binding site" evidence="1">
    <location>
        <position position="277"/>
    </location>
    <ligand>
        <name>[4Fe-4S] cluster</name>
        <dbReference type="ChEBI" id="CHEBI:49883"/>
        <label>2</label>
        <note>4Fe-4S-substrate</note>
    </ligand>
</feature>
<dbReference type="EC" id="4.1.99.22" evidence="1"/>
<dbReference type="EMBL" id="CP000926">
    <property type="protein sequence ID" value="ABZ00018.1"/>
    <property type="molecule type" value="Genomic_DNA"/>
</dbReference>
<dbReference type="RefSeq" id="WP_012273699.1">
    <property type="nucleotide sequence ID" value="NC_010322.1"/>
</dbReference>
<dbReference type="SMR" id="B0KST1"/>
<dbReference type="KEGG" id="ppg:PputGB1_4127"/>
<dbReference type="eggNOG" id="COG2896">
    <property type="taxonomic scope" value="Bacteria"/>
</dbReference>
<dbReference type="HOGENOM" id="CLU_009273_0_1_6"/>
<dbReference type="UniPathway" id="UPA00344"/>
<dbReference type="Proteomes" id="UP000002157">
    <property type="component" value="Chromosome"/>
</dbReference>
<dbReference type="GO" id="GO:0051539">
    <property type="term" value="F:4 iron, 4 sulfur cluster binding"/>
    <property type="evidence" value="ECO:0007669"/>
    <property type="project" value="UniProtKB-UniRule"/>
</dbReference>
<dbReference type="GO" id="GO:0061799">
    <property type="term" value="F:cyclic pyranopterin monophosphate synthase activity"/>
    <property type="evidence" value="ECO:0007669"/>
    <property type="project" value="TreeGrafter"/>
</dbReference>
<dbReference type="GO" id="GO:0061798">
    <property type="term" value="F:GTP 3',8'-cyclase activity"/>
    <property type="evidence" value="ECO:0007669"/>
    <property type="project" value="UniProtKB-UniRule"/>
</dbReference>
<dbReference type="GO" id="GO:0005525">
    <property type="term" value="F:GTP binding"/>
    <property type="evidence" value="ECO:0007669"/>
    <property type="project" value="UniProtKB-UniRule"/>
</dbReference>
<dbReference type="GO" id="GO:0046872">
    <property type="term" value="F:metal ion binding"/>
    <property type="evidence" value="ECO:0007669"/>
    <property type="project" value="UniProtKB-KW"/>
</dbReference>
<dbReference type="GO" id="GO:1904047">
    <property type="term" value="F:S-adenosyl-L-methionine binding"/>
    <property type="evidence" value="ECO:0007669"/>
    <property type="project" value="UniProtKB-UniRule"/>
</dbReference>
<dbReference type="GO" id="GO:0006777">
    <property type="term" value="P:Mo-molybdopterin cofactor biosynthetic process"/>
    <property type="evidence" value="ECO:0007669"/>
    <property type="project" value="UniProtKB-UniRule"/>
</dbReference>
<dbReference type="CDD" id="cd01335">
    <property type="entry name" value="Radical_SAM"/>
    <property type="match status" value="1"/>
</dbReference>
<dbReference type="CDD" id="cd21117">
    <property type="entry name" value="Twitch_MoaA"/>
    <property type="match status" value="1"/>
</dbReference>
<dbReference type="Gene3D" id="3.20.20.70">
    <property type="entry name" value="Aldolase class I"/>
    <property type="match status" value="1"/>
</dbReference>
<dbReference type="HAMAP" id="MF_01225_B">
    <property type="entry name" value="MoaA_B"/>
    <property type="match status" value="1"/>
</dbReference>
<dbReference type="InterPro" id="IPR013785">
    <property type="entry name" value="Aldolase_TIM"/>
</dbReference>
<dbReference type="InterPro" id="IPR006638">
    <property type="entry name" value="Elp3/MiaA/NifB-like_rSAM"/>
</dbReference>
<dbReference type="InterPro" id="IPR013483">
    <property type="entry name" value="MoaA"/>
</dbReference>
<dbReference type="InterPro" id="IPR000385">
    <property type="entry name" value="MoaA_NifB_PqqE_Fe-S-bd_CS"/>
</dbReference>
<dbReference type="InterPro" id="IPR010505">
    <property type="entry name" value="MoaA_twitch"/>
</dbReference>
<dbReference type="InterPro" id="IPR050105">
    <property type="entry name" value="MoCo_biosynth_MoaA/MoaC"/>
</dbReference>
<dbReference type="InterPro" id="IPR007197">
    <property type="entry name" value="rSAM"/>
</dbReference>
<dbReference type="NCBIfam" id="TIGR02666">
    <property type="entry name" value="moaA"/>
    <property type="match status" value="1"/>
</dbReference>
<dbReference type="PANTHER" id="PTHR22960:SF0">
    <property type="entry name" value="MOLYBDENUM COFACTOR BIOSYNTHESIS PROTEIN 1"/>
    <property type="match status" value="1"/>
</dbReference>
<dbReference type="PANTHER" id="PTHR22960">
    <property type="entry name" value="MOLYBDOPTERIN COFACTOR SYNTHESIS PROTEIN A"/>
    <property type="match status" value="1"/>
</dbReference>
<dbReference type="Pfam" id="PF13353">
    <property type="entry name" value="Fer4_12"/>
    <property type="match status" value="1"/>
</dbReference>
<dbReference type="Pfam" id="PF06463">
    <property type="entry name" value="Mob_synth_C"/>
    <property type="match status" value="1"/>
</dbReference>
<dbReference type="Pfam" id="PF04055">
    <property type="entry name" value="Radical_SAM"/>
    <property type="match status" value="1"/>
</dbReference>
<dbReference type="SFLD" id="SFLDG01383">
    <property type="entry name" value="cyclic_pyranopterin_phosphate"/>
    <property type="match status" value="1"/>
</dbReference>
<dbReference type="SFLD" id="SFLDS00029">
    <property type="entry name" value="Radical_SAM"/>
    <property type="match status" value="1"/>
</dbReference>
<dbReference type="SMART" id="SM00729">
    <property type="entry name" value="Elp3"/>
    <property type="match status" value="1"/>
</dbReference>
<dbReference type="SUPFAM" id="SSF102114">
    <property type="entry name" value="Radical SAM enzymes"/>
    <property type="match status" value="1"/>
</dbReference>
<dbReference type="PROSITE" id="PS01305">
    <property type="entry name" value="MOAA_NIFB_PQQE"/>
    <property type="match status" value="1"/>
</dbReference>
<dbReference type="PROSITE" id="PS51918">
    <property type="entry name" value="RADICAL_SAM"/>
    <property type="match status" value="1"/>
</dbReference>
<name>MOAA_PSEPG</name>
<organism>
    <name type="scientific">Pseudomonas putida (strain GB-1)</name>
    <dbReference type="NCBI Taxonomy" id="76869"/>
    <lineage>
        <taxon>Bacteria</taxon>
        <taxon>Pseudomonadati</taxon>
        <taxon>Pseudomonadota</taxon>
        <taxon>Gammaproteobacteria</taxon>
        <taxon>Pseudomonadales</taxon>
        <taxon>Pseudomonadaceae</taxon>
        <taxon>Pseudomonas</taxon>
    </lineage>
</organism>
<comment type="function">
    <text evidence="1">Catalyzes the cyclization of GTP to (8S)-3',8-cyclo-7,8-dihydroguanosine 5'-triphosphate.</text>
</comment>
<comment type="catalytic activity">
    <reaction evidence="1">
        <text>GTP + AH2 + S-adenosyl-L-methionine = (8S)-3',8-cyclo-7,8-dihydroguanosine 5'-triphosphate + 5'-deoxyadenosine + L-methionine + A + H(+)</text>
        <dbReference type="Rhea" id="RHEA:49576"/>
        <dbReference type="ChEBI" id="CHEBI:13193"/>
        <dbReference type="ChEBI" id="CHEBI:15378"/>
        <dbReference type="ChEBI" id="CHEBI:17319"/>
        <dbReference type="ChEBI" id="CHEBI:17499"/>
        <dbReference type="ChEBI" id="CHEBI:37565"/>
        <dbReference type="ChEBI" id="CHEBI:57844"/>
        <dbReference type="ChEBI" id="CHEBI:59789"/>
        <dbReference type="ChEBI" id="CHEBI:131766"/>
        <dbReference type="EC" id="4.1.99.22"/>
    </reaction>
</comment>
<comment type="cofactor">
    <cofactor evidence="1">
        <name>[4Fe-4S] cluster</name>
        <dbReference type="ChEBI" id="CHEBI:49883"/>
    </cofactor>
    <text evidence="1">Binds 2 [4Fe-4S] clusters. Binds 1 [4Fe-4S] cluster coordinated with 3 cysteines and an exchangeable S-adenosyl-L-methionine and 1 [4Fe-4S] cluster coordinated with 3 cysteines and the GTP-derived substrate.</text>
</comment>
<comment type="pathway">
    <text evidence="1">Cofactor biosynthesis; molybdopterin biosynthesis.</text>
</comment>
<comment type="subunit">
    <text evidence="1">Monomer and homodimer.</text>
</comment>
<comment type="similarity">
    <text evidence="1">Belongs to the radical SAM superfamily. MoaA family.</text>
</comment>
<reference key="1">
    <citation type="submission" date="2008-01" db="EMBL/GenBank/DDBJ databases">
        <title>Complete sequence of Pseudomonas putida GB-1.</title>
        <authorList>
            <consortium name="US DOE Joint Genome Institute"/>
            <person name="Copeland A."/>
            <person name="Lucas S."/>
            <person name="Lapidus A."/>
            <person name="Barry K."/>
            <person name="Glavina del Rio T."/>
            <person name="Dalin E."/>
            <person name="Tice H."/>
            <person name="Pitluck S."/>
            <person name="Bruce D."/>
            <person name="Goodwin L."/>
            <person name="Chertkov O."/>
            <person name="Brettin T."/>
            <person name="Detter J.C."/>
            <person name="Han C."/>
            <person name="Kuske C.R."/>
            <person name="Schmutz J."/>
            <person name="Larimer F."/>
            <person name="Land M."/>
            <person name="Hauser L."/>
            <person name="Kyrpides N."/>
            <person name="Kim E."/>
            <person name="McCarthy J.K."/>
            <person name="Richardson P."/>
        </authorList>
    </citation>
    <scope>NUCLEOTIDE SEQUENCE [LARGE SCALE GENOMIC DNA]</scope>
    <source>
        <strain>GB-1</strain>
    </source>
</reference>
<keyword id="KW-0004">4Fe-4S</keyword>
<keyword id="KW-0342">GTP-binding</keyword>
<keyword id="KW-0408">Iron</keyword>
<keyword id="KW-0411">Iron-sulfur</keyword>
<keyword id="KW-0456">Lyase</keyword>
<keyword id="KW-0479">Metal-binding</keyword>
<keyword id="KW-0501">Molybdenum cofactor biosynthesis</keyword>
<keyword id="KW-0547">Nucleotide-binding</keyword>
<keyword id="KW-0949">S-adenosyl-L-methionine</keyword>
<protein>
    <recommendedName>
        <fullName evidence="1">GTP 3',8-cyclase</fullName>
        <ecNumber evidence="1">4.1.99.22</ecNumber>
    </recommendedName>
    <alternativeName>
        <fullName evidence="1">Molybdenum cofactor biosynthesis protein A</fullName>
    </alternativeName>
</protein>
<accession>B0KST1</accession>
<evidence type="ECO:0000255" key="1">
    <source>
        <dbReference type="HAMAP-Rule" id="MF_01225"/>
    </source>
</evidence>
<evidence type="ECO:0000255" key="2">
    <source>
        <dbReference type="PROSITE-ProRule" id="PRU01266"/>
    </source>
</evidence>
<sequence length="334" mass="37712">MEQNSRALIDGFNRKIDYLRMSVTDRCDFRCVYCMAEDMQFLPRQQILSLEELFQVAERFVALGTRKIRLTGGEPLVRQGIVELCGRIAALPGLRELCMTSNGSQLGRLAQPLFDAGVTRLNISLDSLDTDRFKQLTRTGDLAQVVAGIDAARQAGFKRTKLNCVVLKGRNDHELVDLVRFAIDRELDITFIEEMPLGTISEHERGESFCSSDEVRERLAGQFTLIESTESSQGPARYWRLAEAANTRVGFISPHSHNFCATCNRVRLTVEGRLLLCLGNEHSVDLKHVLRAHPGNPERLEKAIRDSLHLKPYRHHFEVGGEVQILRFMNMTGG</sequence>